<sequence length="167" mass="18410">MFRLSNYMLRKSQFPQGLVRAPFGIRGYAQAVQKNEKLVLSMALPYQTIYEKVPVTQVDIPAEDGEMGILKDHVPMIQCLKPGVISVTDESSNKSKYFISGGFAVQQPSNELSITVPEAYKLEDFSSSVANQLLEKHKAEMNSSDEGVAAEAAVRVSVLESLVRALK</sequence>
<feature type="transit peptide" description="Mitochondrion" evidence="1">
    <location>
        <begin position="1"/>
        <end position="28"/>
    </location>
</feature>
<feature type="chain" id="PRO_0000002670" description="ATP synthase subunit delta, mitochondrial">
    <location>
        <begin position="29"/>
        <end position="167"/>
    </location>
</feature>
<comment type="function">
    <text evidence="1">Mitochondrial membrane ATP synthase (F(1)F(0) ATP synthase or Complex V) produces ATP from ADP in the presence of a proton gradient across the membrane which is generated by electron transport complexes of the respiratory chain. F-type ATPases consist of two structural domains, F(1) - containing the extramembraneous catalytic core, and F(0) - containing the membrane proton channel, linked together by a central stalk and a peripheral stalk. During catalysis, ATP turnover in the catalytic domain of F(1) is coupled via a rotary mechanism of the central stalk subunits to proton translocation. Part of the complex F(1) domain and of the central stalk which is part of the complex rotary element. Rotation of the central stalk against the surrounding alpha(3)beta(3) subunits leads to hydrolysis of ATP in three separate catalytic sites on the beta subunits (By similarity).</text>
</comment>
<comment type="subunit">
    <text evidence="1">F-type ATPases have 2 components, CF(1) - the catalytic core - and CF(0) - the membrane proton channel. CF(1) has five subunits: alpha(3), beta(3), gamma(1), delta(1), epsilon(1). CF(0) has three main subunits: a, b and c (By similarity).</text>
</comment>
<comment type="subcellular location">
    <subcellularLocation>
        <location evidence="2">Mitochondrion</location>
    </subcellularLocation>
    <subcellularLocation>
        <location evidence="2">Mitochondrion inner membrane</location>
    </subcellularLocation>
</comment>
<comment type="similarity">
    <text evidence="3">Belongs to the ATPase epsilon chain family.</text>
</comment>
<dbReference type="EMBL" id="CU329671">
    <property type="protein sequence ID" value="CAB89879.2"/>
    <property type="molecule type" value="Genomic_DNA"/>
</dbReference>
<dbReference type="RefSeq" id="NP_596259.2">
    <property type="nucleotide sequence ID" value="NM_001022179.2"/>
</dbReference>
<dbReference type="SMR" id="Q9P6R6"/>
<dbReference type="BioGRID" id="276718">
    <property type="interactions" value="2"/>
</dbReference>
<dbReference type="ComplexPortal" id="CPX-25764">
    <property type="entry name" value="Mitochondrial proton translocating ATP synthase complex"/>
</dbReference>
<dbReference type="FunCoup" id="Q9P6R6">
    <property type="interactions" value="304"/>
</dbReference>
<dbReference type="STRING" id="284812.Q9P6R6"/>
<dbReference type="iPTMnet" id="Q9P6R6"/>
<dbReference type="PaxDb" id="4896-SPBC13E7.04.1"/>
<dbReference type="EnsemblFungi" id="SPBC13E7.04.1">
    <property type="protein sequence ID" value="SPBC13E7.04.1:pep"/>
    <property type="gene ID" value="SPBC13E7.04"/>
</dbReference>
<dbReference type="GeneID" id="2540185"/>
<dbReference type="KEGG" id="spo:2540185"/>
<dbReference type="PomBase" id="SPBC13E7.04">
    <property type="gene designation" value="atp16"/>
</dbReference>
<dbReference type="VEuPathDB" id="FungiDB:SPBC13E7.04"/>
<dbReference type="eggNOG" id="KOG1758">
    <property type="taxonomic scope" value="Eukaryota"/>
</dbReference>
<dbReference type="HOGENOM" id="CLU_084338_0_0_1"/>
<dbReference type="InParanoid" id="Q9P6R6"/>
<dbReference type="OMA" id="HQTLYSE"/>
<dbReference type="PRO" id="PR:Q9P6R6"/>
<dbReference type="Proteomes" id="UP000002485">
    <property type="component" value="Chromosome II"/>
</dbReference>
<dbReference type="GO" id="GO:0099617">
    <property type="term" value="C:matrix side of mitochondrial inner membrane"/>
    <property type="evidence" value="ECO:0000305"/>
    <property type="project" value="PomBase"/>
</dbReference>
<dbReference type="GO" id="GO:0005739">
    <property type="term" value="C:mitochondrion"/>
    <property type="evidence" value="ECO:0007005"/>
    <property type="project" value="PomBase"/>
</dbReference>
<dbReference type="GO" id="GO:0045259">
    <property type="term" value="C:proton-transporting ATP synthase complex"/>
    <property type="evidence" value="ECO:0007669"/>
    <property type="project" value="UniProtKB-KW"/>
</dbReference>
<dbReference type="GO" id="GO:0046933">
    <property type="term" value="F:proton-transporting ATP synthase activity, rotational mechanism"/>
    <property type="evidence" value="ECO:0007669"/>
    <property type="project" value="InterPro"/>
</dbReference>
<dbReference type="GO" id="GO:0015986">
    <property type="term" value="P:proton motive force-driven ATP synthesis"/>
    <property type="evidence" value="ECO:0000318"/>
    <property type="project" value="GO_Central"/>
</dbReference>
<dbReference type="GO" id="GO:0042776">
    <property type="term" value="P:proton motive force-driven mitochondrial ATP synthesis"/>
    <property type="evidence" value="ECO:0000250"/>
    <property type="project" value="PomBase"/>
</dbReference>
<dbReference type="CDD" id="cd12152">
    <property type="entry name" value="F1-ATPase_delta"/>
    <property type="match status" value="1"/>
</dbReference>
<dbReference type="FunFam" id="2.60.15.10:FF:000020">
    <property type="entry name" value="F-type H-ATPase delta subunit"/>
    <property type="match status" value="1"/>
</dbReference>
<dbReference type="Gene3D" id="6.10.140.880">
    <property type="match status" value="1"/>
</dbReference>
<dbReference type="Gene3D" id="2.60.15.10">
    <property type="entry name" value="F0F1 ATP synthase delta/epsilon subunit, N-terminal"/>
    <property type="match status" value="1"/>
</dbReference>
<dbReference type="HAMAP" id="MF_00530">
    <property type="entry name" value="ATP_synth_epsil_bac"/>
    <property type="match status" value="1"/>
</dbReference>
<dbReference type="InterPro" id="IPR001469">
    <property type="entry name" value="ATP_synth_F1_dsu/esu"/>
</dbReference>
<dbReference type="InterPro" id="IPR020546">
    <property type="entry name" value="ATP_synth_F1_dsu/esu_N"/>
</dbReference>
<dbReference type="InterPro" id="IPR048938">
    <property type="entry name" value="ATPD_C_fung"/>
</dbReference>
<dbReference type="InterPro" id="IPR036771">
    <property type="entry name" value="ATPsynth_dsu/esu_N"/>
</dbReference>
<dbReference type="PANTHER" id="PTHR13822">
    <property type="entry name" value="ATP SYNTHASE DELTA/EPSILON CHAIN"/>
    <property type="match status" value="1"/>
</dbReference>
<dbReference type="PANTHER" id="PTHR13822:SF7">
    <property type="entry name" value="ATP SYNTHASE SUBUNIT DELTA, MITOCHONDRIAL"/>
    <property type="match status" value="1"/>
</dbReference>
<dbReference type="Pfam" id="PF02823">
    <property type="entry name" value="ATP-synt_DE_N"/>
    <property type="match status" value="1"/>
</dbReference>
<dbReference type="Pfam" id="PF21334">
    <property type="entry name" value="ATPD_C_fung"/>
    <property type="match status" value="1"/>
</dbReference>
<dbReference type="SUPFAM" id="SSF51344">
    <property type="entry name" value="Epsilon subunit of F1F0-ATP synthase N-terminal domain"/>
    <property type="match status" value="1"/>
</dbReference>
<protein>
    <recommendedName>
        <fullName>ATP synthase subunit delta, mitochondrial</fullName>
    </recommendedName>
    <alternativeName>
        <fullName>F-ATPase delta subunit</fullName>
    </alternativeName>
</protein>
<organism>
    <name type="scientific">Schizosaccharomyces pombe (strain 972 / ATCC 24843)</name>
    <name type="common">Fission yeast</name>
    <dbReference type="NCBI Taxonomy" id="284812"/>
    <lineage>
        <taxon>Eukaryota</taxon>
        <taxon>Fungi</taxon>
        <taxon>Dikarya</taxon>
        <taxon>Ascomycota</taxon>
        <taxon>Taphrinomycotina</taxon>
        <taxon>Schizosaccharomycetes</taxon>
        <taxon>Schizosaccharomycetales</taxon>
        <taxon>Schizosaccharomycetaceae</taxon>
        <taxon>Schizosaccharomyces</taxon>
    </lineage>
</organism>
<proteinExistence type="inferred from homology"/>
<reference key="1">
    <citation type="journal article" date="2002" name="Nature">
        <title>The genome sequence of Schizosaccharomyces pombe.</title>
        <authorList>
            <person name="Wood V."/>
            <person name="Gwilliam R."/>
            <person name="Rajandream M.A."/>
            <person name="Lyne M.H."/>
            <person name="Lyne R."/>
            <person name="Stewart A."/>
            <person name="Sgouros J.G."/>
            <person name="Peat N."/>
            <person name="Hayles J."/>
            <person name="Baker S.G."/>
            <person name="Basham D."/>
            <person name="Bowman S."/>
            <person name="Brooks K."/>
            <person name="Brown D."/>
            <person name="Brown S."/>
            <person name="Chillingworth T."/>
            <person name="Churcher C.M."/>
            <person name="Collins M."/>
            <person name="Connor R."/>
            <person name="Cronin A."/>
            <person name="Davis P."/>
            <person name="Feltwell T."/>
            <person name="Fraser A."/>
            <person name="Gentles S."/>
            <person name="Goble A."/>
            <person name="Hamlin N."/>
            <person name="Harris D.E."/>
            <person name="Hidalgo J."/>
            <person name="Hodgson G."/>
            <person name="Holroyd S."/>
            <person name="Hornsby T."/>
            <person name="Howarth S."/>
            <person name="Huckle E.J."/>
            <person name="Hunt S."/>
            <person name="Jagels K."/>
            <person name="James K.D."/>
            <person name="Jones L."/>
            <person name="Jones M."/>
            <person name="Leather S."/>
            <person name="McDonald S."/>
            <person name="McLean J."/>
            <person name="Mooney P."/>
            <person name="Moule S."/>
            <person name="Mungall K.L."/>
            <person name="Murphy L.D."/>
            <person name="Niblett D."/>
            <person name="Odell C."/>
            <person name="Oliver K."/>
            <person name="O'Neil S."/>
            <person name="Pearson D."/>
            <person name="Quail M.A."/>
            <person name="Rabbinowitsch E."/>
            <person name="Rutherford K.M."/>
            <person name="Rutter S."/>
            <person name="Saunders D."/>
            <person name="Seeger K."/>
            <person name="Sharp S."/>
            <person name="Skelton J."/>
            <person name="Simmonds M.N."/>
            <person name="Squares R."/>
            <person name="Squares S."/>
            <person name="Stevens K."/>
            <person name="Taylor K."/>
            <person name="Taylor R.G."/>
            <person name="Tivey A."/>
            <person name="Walsh S.V."/>
            <person name="Warren T."/>
            <person name="Whitehead S."/>
            <person name="Woodward J.R."/>
            <person name="Volckaert G."/>
            <person name="Aert R."/>
            <person name="Robben J."/>
            <person name="Grymonprez B."/>
            <person name="Weltjens I."/>
            <person name="Vanstreels E."/>
            <person name="Rieger M."/>
            <person name="Schaefer M."/>
            <person name="Mueller-Auer S."/>
            <person name="Gabel C."/>
            <person name="Fuchs M."/>
            <person name="Duesterhoeft A."/>
            <person name="Fritzc C."/>
            <person name="Holzer E."/>
            <person name="Moestl D."/>
            <person name="Hilbert H."/>
            <person name="Borzym K."/>
            <person name="Langer I."/>
            <person name="Beck A."/>
            <person name="Lehrach H."/>
            <person name="Reinhardt R."/>
            <person name="Pohl T.M."/>
            <person name="Eger P."/>
            <person name="Zimmermann W."/>
            <person name="Wedler H."/>
            <person name="Wambutt R."/>
            <person name="Purnelle B."/>
            <person name="Goffeau A."/>
            <person name="Cadieu E."/>
            <person name="Dreano S."/>
            <person name="Gloux S."/>
            <person name="Lelaure V."/>
            <person name="Mottier S."/>
            <person name="Galibert F."/>
            <person name="Aves S.J."/>
            <person name="Xiang Z."/>
            <person name="Hunt C."/>
            <person name="Moore K."/>
            <person name="Hurst S.M."/>
            <person name="Lucas M."/>
            <person name="Rochet M."/>
            <person name="Gaillardin C."/>
            <person name="Tallada V.A."/>
            <person name="Garzon A."/>
            <person name="Thode G."/>
            <person name="Daga R.R."/>
            <person name="Cruzado L."/>
            <person name="Jimenez J."/>
            <person name="Sanchez M."/>
            <person name="del Rey F."/>
            <person name="Benito J."/>
            <person name="Dominguez A."/>
            <person name="Revuelta J.L."/>
            <person name="Moreno S."/>
            <person name="Armstrong J."/>
            <person name="Forsburg S.L."/>
            <person name="Cerutti L."/>
            <person name="Lowe T."/>
            <person name="McCombie W.R."/>
            <person name="Paulsen I."/>
            <person name="Potashkin J."/>
            <person name="Shpakovski G.V."/>
            <person name="Ussery D."/>
            <person name="Barrell B.G."/>
            <person name="Nurse P."/>
        </authorList>
    </citation>
    <scope>NUCLEOTIDE SEQUENCE [LARGE SCALE GENOMIC DNA]</scope>
    <source>
        <strain>972 / ATCC 24843</strain>
    </source>
</reference>
<reference key="2">
    <citation type="journal article" date="2011" name="Science">
        <title>Comparative functional genomics of the fission yeasts.</title>
        <authorList>
            <person name="Rhind N."/>
            <person name="Chen Z."/>
            <person name="Yassour M."/>
            <person name="Thompson D.A."/>
            <person name="Haas B.J."/>
            <person name="Habib N."/>
            <person name="Wapinski I."/>
            <person name="Roy S."/>
            <person name="Lin M.F."/>
            <person name="Heiman D.I."/>
            <person name="Young S.K."/>
            <person name="Furuya K."/>
            <person name="Guo Y."/>
            <person name="Pidoux A."/>
            <person name="Chen H.M."/>
            <person name="Robbertse B."/>
            <person name="Goldberg J.M."/>
            <person name="Aoki K."/>
            <person name="Bayne E.H."/>
            <person name="Berlin A.M."/>
            <person name="Desjardins C.A."/>
            <person name="Dobbs E."/>
            <person name="Dukaj L."/>
            <person name="Fan L."/>
            <person name="FitzGerald M.G."/>
            <person name="French C."/>
            <person name="Gujja S."/>
            <person name="Hansen K."/>
            <person name="Keifenheim D."/>
            <person name="Levin J.Z."/>
            <person name="Mosher R.A."/>
            <person name="Mueller C.A."/>
            <person name="Pfiffner J."/>
            <person name="Priest M."/>
            <person name="Russ C."/>
            <person name="Smialowska A."/>
            <person name="Swoboda P."/>
            <person name="Sykes S.M."/>
            <person name="Vaughn M."/>
            <person name="Vengrova S."/>
            <person name="Yoder R."/>
            <person name="Zeng Q."/>
            <person name="Allshire R."/>
            <person name="Baulcombe D."/>
            <person name="Birren B.W."/>
            <person name="Brown W."/>
            <person name="Ekwall K."/>
            <person name="Kellis M."/>
            <person name="Leatherwood J."/>
            <person name="Levin H."/>
            <person name="Margalit H."/>
            <person name="Martienssen R."/>
            <person name="Nieduszynski C.A."/>
            <person name="Spatafora J.W."/>
            <person name="Friedman N."/>
            <person name="Dalgaard J.Z."/>
            <person name="Baumann P."/>
            <person name="Niki H."/>
            <person name="Regev A."/>
            <person name="Nusbaum C."/>
        </authorList>
    </citation>
    <scope>REVISION OF GENE MODEL</scope>
</reference>
<reference key="3">
    <citation type="journal article" date="2006" name="Nat. Biotechnol.">
        <title>ORFeome cloning and global analysis of protein localization in the fission yeast Schizosaccharomyces pombe.</title>
        <authorList>
            <person name="Matsuyama A."/>
            <person name="Arai R."/>
            <person name="Yashiroda Y."/>
            <person name="Shirai A."/>
            <person name="Kamata A."/>
            <person name="Sekido S."/>
            <person name="Kobayashi Y."/>
            <person name="Hashimoto A."/>
            <person name="Hamamoto M."/>
            <person name="Hiraoka Y."/>
            <person name="Horinouchi S."/>
            <person name="Yoshida M."/>
        </authorList>
    </citation>
    <scope>SUBCELLULAR LOCATION [LARGE SCALE ANALYSIS]</scope>
</reference>
<name>ATPD_SCHPO</name>
<evidence type="ECO:0000250" key="1"/>
<evidence type="ECO:0000269" key="2">
    <source>
    </source>
</evidence>
<evidence type="ECO:0000305" key="3"/>
<gene>
    <name type="primary">atp16</name>
    <name type="ORF">SPBC13E7.04</name>
</gene>
<keyword id="KW-0066">ATP synthesis</keyword>
<keyword id="KW-0139">CF(1)</keyword>
<keyword id="KW-0375">Hydrogen ion transport</keyword>
<keyword id="KW-0406">Ion transport</keyword>
<keyword id="KW-0472">Membrane</keyword>
<keyword id="KW-0496">Mitochondrion</keyword>
<keyword id="KW-0999">Mitochondrion inner membrane</keyword>
<keyword id="KW-1185">Reference proteome</keyword>
<keyword id="KW-0809">Transit peptide</keyword>
<keyword id="KW-0813">Transport</keyword>
<accession>Q9P6R6</accession>